<sequence>MQSKRSRVLVKFSGEALAGENGFGIDTKILGFIASEIRSLVENKIEVGIVIGGGNIIRGVSAAQDGVIRRTSADYMGMLATVINAVAMQEALEHAGLDVRVQSAIELKEICESYIYRRAIRHLEKGRVVIFGAGTGNPFFTTDTAATLRAIEIGANMIIKATKVDGVYDKDPNKFSDAKKLDTLSYEEALDDRIKVMDDTAIALAKDNRLPIVVCNMFKPGNLLKIIQGDNGLCSVVGQRQ</sequence>
<gene>
    <name evidence="1" type="primary">pyrH</name>
    <name type="ordered locus">WS0238</name>
</gene>
<dbReference type="EC" id="2.7.4.22" evidence="1"/>
<dbReference type="EMBL" id="BX571657">
    <property type="protein sequence ID" value="CAE09394.1"/>
    <property type="molecule type" value="Genomic_DNA"/>
</dbReference>
<dbReference type="SMR" id="Q7MAH8"/>
<dbReference type="STRING" id="273121.WS0238"/>
<dbReference type="KEGG" id="wsu:WS0238"/>
<dbReference type="eggNOG" id="COG0528">
    <property type="taxonomic scope" value="Bacteria"/>
</dbReference>
<dbReference type="HOGENOM" id="CLU_033861_0_0_7"/>
<dbReference type="UniPathway" id="UPA00159">
    <property type="reaction ID" value="UER00275"/>
</dbReference>
<dbReference type="Proteomes" id="UP000000422">
    <property type="component" value="Chromosome"/>
</dbReference>
<dbReference type="GO" id="GO:0005829">
    <property type="term" value="C:cytosol"/>
    <property type="evidence" value="ECO:0007669"/>
    <property type="project" value="TreeGrafter"/>
</dbReference>
<dbReference type="GO" id="GO:0005524">
    <property type="term" value="F:ATP binding"/>
    <property type="evidence" value="ECO:0007669"/>
    <property type="project" value="UniProtKB-KW"/>
</dbReference>
<dbReference type="GO" id="GO:0033862">
    <property type="term" value="F:UMP kinase activity"/>
    <property type="evidence" value="ECO:0007669"/>
    <property type="project" value="UniProtKB-EC"/>
</dbReference>
<dbReference type="GO" id="GO:0044210">
    <property type="term" value="P:'de novo' CTP biosynthetic process"/>
    <property type="evidence" value="ECO:0007669"/>
    <property type="project" value="UniProtKB-UniRule"/>
</dbReference>
<dbReference type="GO" id="GO:0006225">
    <property type="term" value="P:UDP biosynthetic process"/>
    <property type="evidence" value="ECO:0007669"/>
    <property type="project" value="TreeGrafter"/>
</dbReference>
<dbReference type="CDD" id="cd04254">
    <property type="entry name" value="AAK_UMPK-PyrH-Ec"/>
    <property type="match status" value="1"/>
</dbReference>
<dbReference type="FunFam" id="3.40.1160.10:FF:000001">
    <property type="entry name" value="Uridylate kinase"/>
    <property type="match status" value="1"/>
</dbReference>
<dbReference type="Gene3D" id="3.40.1160.10">
    <property type="entry name" value="Acetylglutamate kinase-like"/>
    <property type="match status" value="1"/>
</dbReference>
<dbReference type="HAMAP" id="MF_01220_B">
    <property type="entry name" value="PyrH_B"/>
    <property type="match status" value="1"/>
</dbReference>
<dbReference type="InterPro" id="IPR036393">
    <property type="entry name" value="AceGlu_kinase-like_sf"/>
</dbReference>
<dbReference type="InterPro" id="IPR001048">
    <property type="entry name" value="Asp/Glu/Uridylate_kinase"/>
</dbReference>
<dbReference type="InterPro" id="IPR011817">
    <property type="entry name" value="Uridylate_kinase"/>
</dbReference>
<dbReference type="InterPro" id="IPR015963">
    <property type="entry name" value="Uridylate_kinase_bac"/>
</dbReference>
<dbReference type="NCBIfam" id="TIGR02075">
    <property type="entry name" value="pyrH_bact"/>
    <property type="match status" value="1"/>
</dbReference>
<dbReference type="PANTHER" id="PTHR42833">
    <property type="entry name" value="URIDYLATE KINASE"/>
    <property type="match status" value="1"/>
</dbReference>
<dbReference type="PANTHER" id="PTHR42833:SF4">
    <property type="entry name" value="URIDYLATE KINASE PUMPKIN, CHLOROPLASTIC"/>
    <property type="match status" value="1"/>
</dbReference>
<dbReference type="Pfam" id="PF00696">
    <property type="entry name" value="AA_kinase"/>
    <property type="match status" value="1"/>
</dbReference>
<dbReference type="PIRSF" id="PIRSF005650">
    <property type="entry name" value="Uridylate_kin"/>
    <property type="match status" value="1"/>
</dbReference>
<dbReference type="SUPFAM" id="SSF53633">
    <property type="entry name" value="Carbamate kinase-like"/>
    <property type="match status" value="1"/>
</dbReference>
<keyword id="KW-0021">Allosteric enzyme</keyword>
<keyword id="KW-0067">ATP-binding</keyword>
<keyword id="KW-0963">Cytoplasm</keyword>
<keyword id="KW-0418">Kinase</keyword>
<keyword id="KW-0547">Nucleotide-binding</keyword>
<keyword id="KW-0665">Pyrimidine biosynthesis</keyword>
<keyword id="KW-1185">Reference proteome</keyword>
<keyword id="KW-0808">Transferase</keyword>
<protein>
    <recommendedName>
        <fullName evidence="1">Uridylate kinase</fullName>
        <shortName evidence="1">UK</shortName>
        <ecNumber evidence="1">2.7.4.22</ecNumber>
    </recommendedName>
    <alternativeName>
        <fullName evidence="1">Uridine monophosphate kinase</fullName>
        <shortName evidence="1">UMP kinase</shortName>
        <shortName evidence="1">UMPK</shortName>
    </alternativeName>
</protein>
<feature type="chain" id="PRO_0000323985" description="Uridylate kinase">
    <location>
        <begin position="1"/>
        <end position="241"/>
    </location>
</feature>
<feature type="region of interest" description="Involved in allosteric activation by GTP" evidence="1">
    <location>
        <begin position="19"/>
        <end position="24"/>
    </location>
</feature>
<feature type="binding site" evidence="1">
    <location>
        <begin position="11"/>
        <end position="14"/>
    </location>
    <ligand>
        <name>ATP</name>
        <dbReference type="ChEBI" id="CHEBI:30616"/>
    </ligand>
</feature>
<feature type="binding site" evidence="1">
    <location>
        <position position="53"/>
    </location>
    <ligand>
        <name>UMP</name>
        <dbReference type="ChEBI" id="CHEBI:57865"/>
    </ligand>
</feature>
<feature type="binding site" evidence="1">
    <location>
        <position position="54"/>
    </location>
    <ligand>
        <name>ATP</name>
        <dbReference type="ChEBI" id="CHEBI:30616"/>
    </ligand>
</feature>
<feature type="binding site" evidence="1">
    <location>
        <position position="58"/>
    </location>
    <ligand>
        <name>ATP</name>
        <dbReference type="ChEBI" id="CHEBI:30616"/>
    </ligand>
</feature>
<feature type="binding site" evidence="1">
    <location>
        <position position="74"/>
    </location>
    <ligand>
        <name>UMP</name>
        <dbReference type="ChEBI" id="CHEBI:57865"/>
    </ligand>
</feature>
<feature type="binding site" evidence="1">
    <location>
        <begin position="135"/>
        <end position="142"/>
    </location>
    <ligand>
        <name>UMP</name>
        <dbReference type="ChEBI" id="CHEBI:57865"/>
    </ligand>
</feature>
<feature type="binding site" evidence="1">
    <location>
        <position position="162"/>
    </location>
    <ligand>
        <name>ATP</name>
        <dbReference type="ChEBI" id="CHEBI:30616"/>
    </ligand>
</feature>
<feature type="binding site" evidence="1">
    <location>
        <position position="168"/>
    </location>
    <ligand>
        <name>ATP</name>
        <dbReference type="ChEBI" id="CHEBI:30616"/>
    </ligand>
</feature>
<feature type="binding site" evidence="1">
    <location>
        <position position="171"/>
    </location>
    <ligand>
        <name>ATP</name>
        <dbReference type="ChEBI" id="CHEBI:30616"/>
    </ligand>
</feature>
<evidence type="ECO:0000255" key="1">
    <source>
        <dbReference type="HAMAP-Rule" id="MF_01220"/>
    </source>
</evidence>
<comment type="function">
    <text evidence="1">Catalyzes the reversible phosphorylation of UMP to UDP.</text>
</comment>
<comment type="catalytic activity">
    <reaction evidence="1">
        <text>UMP + ATP = UDP + ADP</text>
        <dbReference type="Rhea" id="RHEA:24400"/>
        <dbReference type="ChEBI" id="CHEBI:30616"/>
        <dbReference type="ChEBI" id="CHEBI:57865"/>
        <dbReference type="ChEBI" id="CHEBI:58223"/>
        <dbReference type="ChEBI" id="CHEBI:456216"/>
        <dbReference type="EC" id="2.7.4.22"/>
    </reaction>
</comment>
<comment type="activity regulation">
    <text evidence="1">Allosterically activated by GTP. Inhibited by UTP.</text>
</comment>
<comment type="pathway">
    <text evidence="1">Pyrimidine metabolism; CTP biosynthesis via de novo pathway; UDP from UMP (UMPK route): step 1/1.</text>
</comment>
<comment type="subunit">
    <text evidence="1">Homohexamer.</text>
</comment>
<comment type="subcellular location">
    <subcellularLocation>
        <location evidence="1">Cytoplasm</location>
    </subcellularLocation>
</comment>
<comment type="similarity">
    <text evidence="1">Belongs to the UMP kinase family.</text>
</comment>
<accession>Q7MAH8</accession>
<reference key="1">
    <citation type="journal article" date="2003" name="Proc. Natl. Acad. Sci. U.S.A.">
        <title>Complete genome sequence and analysis of Wolinella succinogenes.</title>
        <authorList>
            <person name="Baar C."/>
            <person name="Eppinger M."/>
            <person name="Raddatz G."/>
            <person name="Simon J."/>
            <person name="Lanz C."/>
            <person name="Klimmek O."/>
            <person name="Nandakumar R."/>
            <person name="Gross R."/>
            <person name="Rosinus A."/>
            <person name="Keller H."/>
            <person name="Jagtap P."/>
            <person name="Linke B."/>
            <person name="Meyer F."/>
            <person name="Lederer H."/>
            <person name="Schuster S.C."/>
        </authorList>
    </citation>
    <scope>NUCLEOTIDE SEQUENCE [LARGE SCALE GENOMIC DNA]</scope>
    <source>
        <strain>ATCC 29543 / DSM 1740 / CCUG 13145 / JCM 31913 / LMG 7466 / NCTC 11488 / FDC 602W</strain>
    </source>
</reference>
<proteinExistence type="inferred from homology"/>
<organism>
    <name type="scientific">Wolinella succinogenes (strain ATCC 29543 / DSM 1740 / CCUG 13145 / JCM 31913 / LMG 7466 / NCTC 11488 / FDC 602W)</name>
    <name type="common">Vibrio succinogenes</name>
    <dbReference type="NCBI Taxonomy" id="273121"/>
    <lineage>
        <taxon>Bacteria</taxon>
        <taxon>Pseudomonadati</taxon>
        <taxon>Campylobacterota</taxon>
        <taxon>Epsilonproteobacteria</taxon>
        <taxon>Campylobacterales</taxon>
        <taxon>Helicobacteraceae</taxon>
        <taxon>Wolinella</taxon>
    </lineage>
</organism>
<name>PYRH_WOLSU</name>